<reference key="1">
    <citation type="journal article" date="2002" name="Mol. Biol. Cell">
        <title>Novel myosin heavy chain kinase involved in disassembly of myosin II filaments and efficient cleavage in mitotic dictyostelium cells.</title>
        <authorList>
            <person name="Nagasaki A."/>
            <person name="Itoh G."/>
            <person name="Yumura S."/>
            <person name="Uyeda T.P.Q."/>
        </authorList>
    </citation>
    <scope>NUCLEOTIDE SEQUENCE [MRNA]</scope>
    <scope>FUNCTION</scope>
    <scope>CATALYTIC ACTIVITY</scope>
    <scope>DEVELOPMENTAL STAGE</scope>
    <scope>DISRUPTION PHENOTYPE</scope>
    <scope>SUBCELLULAR LOCATION</scope>
</reference>
<reference key="2">
    <citation type="journal article" date="2005" name="Nature">
        <title>The genome of the social amoeba Dictyostelium discoideum.</title>
        <authorList>
            <person name="Eichinger L."/>
            <person name="Pachebat J.A."/>
            <person name="Gloeckner G."/>
            <person name="Rajandream M.A."/>
            <person name="Sucgang R."/>
            <person name="Berriman M."/>
            <person name="Song J."/>
            <person name="Olsen R."/>
            <person name="Szafranski K."/>
            <person name="Xu Q."/>
            <person name="Tunggal B."/>
            <person name="Kummerfeld S."/>
            <person name="Madera M."/>
            <person name="Konfortov B.A."/>
            <person name="Rivero F."/>
            <person name="Bankier A.T."/>
            <person name="Lehmann R."/>
            <person name="Hamlin N."/>
            <person name="Davies R."/>
            <person name="Gaudet P."/>
            <person name="Fey P."/>
            <person name="Pilcher K."/>
            <person name="Chen G."/>
            <person name="Saunders D."/>
            <person name="Sodergren E.J."/>
            <person name="Davis P."/>
            <person name="Kerhornou A."/>
            <person name="Nie X."/>
            <person name="Hall N."/>
            <person name="Anjard C."/>
            <person name="Hemphill L."/>
            <person name="Bason N."/>
            <person name="Farbrother P."/>
            <person name="Desany B."/>
            <person name="Just E."/>
            <person name="Morio T."/>
            <person name="Rost R."/>
            <person name="Churcher C.M."/>
            <person name="Cooper J."/>
            <person name="Haydock S."/>
            <person name="van Driessche N."/>
            <person name="Cronin A."/>
            <person name="Goodhead I."/>
            <person name="Muzny D.M."/>
            <person name="Mourier T."/>
            <person name="Pain A."/>
            <person name="Lu M."/>
            <person name="Harper D."/>
            <person name="Lindsay R."/>
            <person name="Hauser H."/>
            <person name="James K.D."/>
            <person name="Quiles M."/>
            <person name="Madan Babu M."/>
            <person name="Saito T."/>
            <person name="Buchrieser C."/>
            <person name="Wardroper A."/>
            <person name="Felder M."/>
            <person name="Thangavelu M."/>
            <person name="Johnson D."/>
            <person name="Knights A."/>
            <person name="Loulseged H."/>
            <person name="Mungall K.L."/>
            <person name="Oliver K."/>
            <person name="Price C."/>
            <person name="Quail M.A."/>
            <person name="Urushihara H."/>
            <person name="Hernandez J."/>
            <person name="Rabbinowitsch E."/>
            <person name="Steffen D."/>
            <person name="Sanders M."/>
            <person name="Ma J."/>
            <person name="Kohara Y."/>
            <person name="Sharp S."/>
            <person name="Simmonds M.N."/>
            <person name="Spiegler S."/>
            <person name="Tivey A."/>
            <person name="Sugano S."/>
            <person name="White B."/>
            <person name="Walker D."/>
            <person name="Woodward J.R."/>
            <person name="Winckler T."/>
            <person name="Tanaka Y."/>
            <person name="Shaulsky G."/>
            <person name="Schleicher M."/>
            <person name="Weinstock G.M."/>
            <person name="Rosenthal A."/>
            <person name="Cox E.C."/>
            <person name="Chisholm R.L."/>
            <person name="Gibbs R.A."/>
            <person name="Loomis W.F."/>
            <person name="Platzer M."/>
            <person name="Kay R.R."/>
            <person name="Williams J.G."/>
            <person name="Dear P.H."/>
            <person name="Noegel A.A."/>
            <person name="Barrell B.G."/>
            <person name="Kuspa A."/>
        </authorList>
    </citation>
    <scope>NUCLEOTIDE SEQUENCE [LARGE SCALE GENOMIC DNA]</scope>
    <source>
        <strain>AX4</strain>
    </source>
</reference>
<reference key="3">
    <citation type="submission" date="1998-08" db="EMBL/GenBank/DDBJ databases">
        <title>Dictyostelium discoideum developmental gene mhkC.</title>
        <authorList>
            <person name="Iranfar N."/>
            <person name="Loomis W.F."/>
        </authorList>
    </citation>
    <scope>NUCLEOTIDE SEQUENCE [GENOMIC DNA] OF 1-751</scope>
    <source>
        <strain>AX4</strain>
    </source>
</reference>
<reference key="4">
    <citation type="journal article" date="2001" name="J. Biol. Chem.">
        <title>Specific phosphorylation of threonine by the Dictyostelium myosin II heavy chain kinase family.</title>
        <authorList>
            <person name="Luo X."/>
            <person name="Crawley S.W."/>
            <person name="Steimle P.A."/>
            <person name="Egelhoff T.T."/>
            <person name="Cote G.P."/>
        </authorList>
    </citation>
    <scope>FUNCTION</scope>
    <scope>CATALYTIC ACTIVITY</scope>
</reference>
<reference key="5">
    <citation type="journal article" date="2002" name="BMC Cell Biol.">
        <title>Differential localization in cells of myosin II heavy chain kinases during cytokinesis and polarized migration.</title>
        <authorList>
            <person name="Liang W."/>
            <person name="Licate L.S."/>
            <person name="Warrick H.M."/>
            <person name="Spudich J.A."/>
            <person name="Egelhoff T.T."/>
        </authorList>
    </citation>
    <scope>FUNCTION</scope>
    <scope>AUTOPHOSPHORYLATION</scope>
    <scope>SUBCELLULAR LOCATION</scope>
    <scope>INTERACTION WITH MHCA</scope>
</reference>
<reference key="6">
    <citation type="journal article" date="2005" name="Mol. Biol. Cell">
        <title>Multiple myosin II heavy chain kinases: roles in filament assembly control and proper cytokinesis in Dictyostelium.</title>
        <authorList>
            <person name="Yumura S."/>
            <person name="Yoshida M."/>
            <person name="Betapudi V."/>
            <person name="Licate L.S."/>
            <person name="Iwadate Y."/>
            <person name="Nagasaki A."/>
            <person name="Uyeda T.Q.P."/>
            <person name="Egelhoff T.T."/>
        </authorList>
    </citation>
    <scope>FUNCTION</scope>
    <scope>DISRUPTION PHENOTYPE</scope>
</reference>
<reference key="7">
    <citation type="journal article" date="2007" name="J. Cell Biol.">
        <title>Rap1 controls cell adhesion and cell motility through the regulation of myosin II.</title>
        <authorList>
            <person name="Jeon T.J."/>
            <person name="Lee D.-J."/>
            <person name="Merlot S."/>
            <person name="Weeks G."/>
            <person name="Firtel R.A."/>
        </authorList>
    </citation>
    <scope>DISRUPTION PHENOTYPE</scope>
</reference>
<reference key="8">
    <citation type="journal article" date="2008" name="BMC Genomics">
        <title>Genome-wide transcriptional changes induced by phagocytosis or growth on bacteria in Dictyostelium.</title>
        <authorList>
            <person name="Sillo A."/>
            <person name="Bloomfield G."/>
            <person name="Balest A."/>
            <person name="Balbo A."/>
            <person name="Pergolizzi B."/>
            <person name="Peracino B."/>
            <person name="Skelton J."/>
            <person name="Ivens A."/>
            <person name="Bozzaro S."/>
        </authorList>
    </citation>
    <scope>INDUCTION [LARGE SCALE ANALYSIS]</scope>
</reference>
<accession>Q8MY12</accession>
<accession>O76739</accession>
<accession>Q54FQ7</accession>
<proteinExistence type="evidence at protein level"/>
<evidence type="ECO:0000250" key="1"/>
<evidence type="ECO:0000255" key="2">
    <source>
        <dbReference type="PROSITE-ProRule" id="PRU00501"/>
    </source>
</evidence>
<evidence type="ECO:0000256" key="3">
    <source>
        <dbReference type="SAM" id="MobiDB-lite"/>
    </source>
</evidence>
<evidence type="ECO:0000269" key="4">
    <source>
    </source>
</evidence>
<evidence type="ECO:0000269" key="5">
    <source>
    </source>
</evidence>
<evidence type="ECO:0000269" key="6">
    <source>
    </source>
</evidence>
<evidence type="ECO:0000269" key="7">
    <source>
    </source>
</evidence>
<evidence type="ECO:0000269" key="8">
    <source>
    </source>
</evidence>
<evidence type="ECO:0000269" key="9">
    <source>
    </source>
</evidence>
<evidence type="ECO:0000305" key="10"/>
<evidence type="ECO:0000305" key="11">
    <source>
    </source>
</evidence>
<evidence type="ECO:0000305" key="12">
    <source>
    </source>
</evidence>
<sequence>MEEKKTGAAAALALLNQKFPVADVIAGTKCERAIKWELTIGDDLKPKWTHSIVCVSIEKTPFAKGSCRTAHKLKDWSQPDQGLVGKFSTNKKTTRDSYFTDVLMQTFCAKWAEKFNEAKPPKPITFLPSYVYELIDHPPPYPVCGGEPFIEGDYKKHNNNSGYVSSDARNTPQSFSHFSYELSNHELLIVDIQGVNDFYTDPQIHTKSGEGFGEGNLGETGFHKFLQTHKCNPVCDFLKLKPINQSKKALLRGTLPVVQLMDFHDAIGLNGNGSGPKNNYDMNYFRNGGGAQQPISLDDEEKMLQEQLERIRAQQQQKSKPSPPLVKQPSGNNLHKQQSPSSPTSKPVPQIVKTPSQSNVVNKSPVSPPKENSNVKLEQDNINNNNSSISSNNDNSNNNNNNNDNINNSSNSSSVNSNSSSVSSSSSSSSSSSSSSTTNAAPISIQVSRNSPPPQQPIQPSSAAASASSTSSSNVPTPESTSTSSMEQTPDRSEFEKWDLTSIKNIDTVRGLQSECITGDSLRLYSGSNDGQIGVWDAVELKHVTNIKAHGKSIRAVIKRPGFDQNILTAGADSLVKEWDINTQQTIKEIKESNEVNTIFIQDNLLYTGCNDKTVKVWDMRSYECVKTLSGHTRAIKSVCAMGNLLFSGSNDQQIYVWNLATGTILTNFQGHEGWVKTLYAHNNMLYSGSHDETIRIWDLKTTRCVNTIKCKDRVETLHVTNQGIFAGSGDWLQVFSHDKYENLASLNTRSSILCLWRNQNQLFTGSLASNLKVWSWDKM</sequence>
<gene>
    <name type="primary">mhkC</name>
    <name type="synonym">mhckC</name>
    <name type="ORF">DDB_G0290687</name>
</gene>
<feature type="chain" id="PRO_0000361271" description="Myosin heavy chain kinase C">
    <location>
        <begin position="1"/>
        <end position="780"/>
    </location>
</feature>
<feature type="domain" description="Alpha-type protein kinase" evidence="2">
    <location>
        <begin position="40"/>
        <end position="243"/>
    </location>
</feature>
<feature type="repeat" description="WD 1">
    <location>
        <begin position="507"/>
        <end position="546"/>
    </location>
</feature>
<feature type="repeat" description="WD 2">
    <location>
        <begin position="549"/>
        <end position="589"/>
    </location>
</feature>
<feature type="repeat" description="WD 3">
    <location>
        <begin position="591"/>
        <end position="628"/>
    </location>
</feature>
<feature type="repeat" description="WD 4">
    <location>
        <begin position="631"/>
        <end position="668"/>
    </location>
</feature>
<feature type="repeat" description="WD 5">
    <location>
        <begin position="671"/>
        <end position="708"/>
    </location>
</feature>
<feature type="repeat" description="WD 6">
    <location>
        <begin position="748"/>
        <end position="780"/>
    </location>
</feature>
<feature type="region of interest" description="Disordered" evidence="3">
    <location>
        <begin position="310"/>
        <end position="495"/>
    </location>
</feature>
<feature type="compositionally biased region" description="Low complexity" evidence="3">
    <location>
        <begin position="337"/>
        <end position="350"/>
    </location>
</feature>
<feature type="compositionally biased region" description="Polar residues" evidence="3">
    <location>
        <begin position="353"/>
        <end position="376"/>
    </location>
</feature>
<feature type="compositionally biased region" description="Low complexity" evidence="3">
    <location>
        <begin position="380"/>
        <end position="436"/>
    </location>
</feature>
<feature type="compositionally biased region" description="Polar residues" evidence="3">
    <location>
        <begin position="437"/>
        <end position="450"/>
    </location>
</feature>
<feature type="compositionally biased region" description="Low complexity" evidence="3">
    <location>
        <begin position="458"/>
        <end position="488"/>
    </location>
</feature>
<dbReference type="EC" id="2.7.11.7" evidence="11 12"/>
<dbReference type="EMBL" id="AB079663">
    <property type="protein sequence ID" value="BAC07316.1"/>
    <property type="molecule type" value="mRNA"/>
</dbReference>
<dbReference type="EMBL" id="AAFI02000166">
    <property type="protein sequence ID" value="EAL62094.1"/>
    <property type="molecule type" value="Genomic_DNA"/>
</dbReference>
<dbReference type="EMBL" id="AF079447">
    <property type="protein sequence ID" value="AAC31918.1"/>
    <property type="molecule type" value="Genomic_DNA"/>
</dbReference>
<dbReference type="RefSeq" id="XP_635600.1">
    <property type="nucleotide sequence ID" value="XM_630508.1"/>
</dbReference>
<dbReference type="SMR" id="Q8MY12"/>
<dbReference type="FunCoup" id="Q8MY12">
    <property type="interactions" value="500"/>
</dbReference>
<dbReference type="STRING" id="44689.Q8MY12"/>
<dbReference type="PaxDb" id="44689-DDB0216199"/>
<dbReference type="EnsemblProtists" id="EAL62094">
    <property type="protein sequence ID" value="EAL62094"/>
    <property type="gene ID" value="DDB_G0290687"/>
</dbReference>
<dbReference type="GeneID" id="8627781"/>
<dbReference type="KEGG" id="ddi:DDB_G0290687"/>
<dbReference type="dictyBase" id="DDB_G0290687">
    <property type="gene designation" value="mhkC"/>
</dbReference>
<dbReference type="VEuPathDB" id="AmoebaDB:DDB_G0290687"/>
<dbReference type="eggNOG" id="KOG0274">
    <property type="taxonomic scope" value="Eukaryota"/>
</dbReference>
<dbReference type="HOGENOM" id="CLU_378764_0_0_1"/>
<dbReference type="InParanoid" id="Q8MY12"/>
<dbReference type="OMA" id="CERAIKW"/>
<dbReference type="PhylomeDB" id="Q8MY12"/>
<dbReference type="BRENDA" id="2.7.11.7">
    <property type="organism ID" value="1939"/>
</dbReference>
<dbReference type="PRO" id="PR:Q8MY12"/>
<dbReference type="Proteomes" id="UP000002195">
    <property type="component" value="Chromosome 5"/>
</dbReference>
<dbReference type="GO" id="GO:0005826">
    <property type="term" value="C:actomyosin contractile ring"/>
    <property type="evidence" value="ECO:0000314"/>
    <property type="project" value="dictyBase"/>
</dbReference>
<dbReference type="GO" id="GO:0005938">
    <property type="term" value="C:cell cortex"/>
    <property type="evidence" value="ECO:0000314"/>
    <property type="project" value="dictyBase"/>
</dbReference>
<dbReference type="GO" id="GO:0032154">
    <property type="term" value="C:cleavage furrow"/>
    <property type="evidence" value="ECO:0007669"/>
    <property type="project" value="UniProtKB-SubCell"/>
</dbReference>
<dbReference type="GO" id="GO:0005524">
    <property type="term" value="F:ATP binding"/>
    <property type="evidence" value="ECO:0000305"/>
    <property type="project" value="dictyBase"/>
</dbReference>
<dbReference type="GO" id="GO:0016905">
    <property type="term" value="F:myosin heavy chain kinase activity"/>
    <property type="evidence" value="ECO:0000315"/>
    <property type="project" value="dictyBase"/>
</dbReference>
<dbReference type="GO" id="GO:0045159">
    <property type="term" value="F:myosin II binding"/>
    <property type="evidence" value="ECO:0000250"/>
    <property type="project" value="dictyBase"/>
</dbReference>
<dbReference type="GO" id="GO:0004674">
    <property type="term" value="F:protein serine/threonine kinase activity"/>
    <property type="evidence" value="ECO:0000314"/>
    <property type="project" value="dictyBase"/>
</dbReference>
<dbReference type="GO" id="GO:0006935">
    <property type="term" value="P:chemotaxis"/>
    <property type="evidence" value="ECO:0000315"/>
    <property type="project" value="dictyBase"/>
</dbReference>
<dbReference type="GO" id="GO:0000281">
    <property type="term" value="P:mitotic cytokinesis"/>
    <property type="evidence" value="ECO:0000315"/>
    <property type="project" value="dictyBase"/>
</dbReference>
<dbReference type="GO" id="GO:0031037">
    <property type="term" value="P:myosin II filament disassembly"/>
    <property type="evidence" value="ECO:0000315"/>
    <property type="project" value="dictyBase"/>
</dbReference>
<dbReference type="GO" id="GO:1903013">
    <property type="term" value="P:response to differentiation-inducing factor 1"/>
    <property type="evidence" value="ECO:0007005"/>
    <property type="project" value="dictyBase"/>
</dbReference>
<dbReference type="CDD" id="cd16968">
    <property type="entry name" value="Alpha_kinase_MHCK_like"/>
    <property type="match status" value="1"/>
</dbReference>
<dbReference type="CDD" id="cd00200">
    <property type="entry name" value="WD40"/>
    <property type="match status" value="1"/>
</dbReference>
<dbReference type="FunFam" id="3.20.200.10:FF:000002">
    <property type="entry name" value="Eukaryotic elongation factor 2 kinase"/>
    <property type="match status" value="1"/>
</dbReference>
<dbReference type="FunFam" id="2.130.10.10:FF:003363">
    <property type="entry name" value="Myosin heavy chain kinase C"/>
    <property type="match status" value="1"/>
</dbReference>
<dbReference type="Gene3D" id="3.20.200.10">
    <property type="entry name" value="MHCK/EF2 kinase"/>
    <property type="match status" value="1"/>
</dbReference>
<dbReference type="Gene3D" id="3.30.200.20">
    <property type="entry name" value="Phosphorylase Kinase, domain 1"/>
    <property type="match status" value="2"/>
</dbReference>
<dbReference type="Gene3D" id="2.130.10.10">
    <property type="entry name" value="YVTN repeat-like/Quinoprotein amine dehydrogenase"/>
    <property type="match status" value="1"/>
</dbReference>
<dbReference type="InterPro" id="IPR004166">
    <property type="entry name" value="a-kinase_dom"/>
</dbReference>
<dbReference type="InterPro" id="IPR051852">
    <property type="entry name" value="Alpha-type_PK"/>
</dbReference>
<dbReference type="InterPro" id="IPR020472">
    <property type="entry name" value="G-protein_beta_WD-40_rep"/>
</dbReference>
<dbReference type="InterPro" id="IPR011009">
    <property type="entry name" value="Kinase-like_dom_sf"/>
</dbReference>
<dbReference type="InterPro" id="IPR015943">
    <property type="entry name" value="WD40/YVTN_repeat-like_dom_sf"/>
</dbReference>
<dbReference type="InterPro" id="IPR019775">
    <property type="entry name" value="WD40_repeat_CS"/>
</dbReference>
<dbReference type="InterPro" id="IPR036322">
    <property type="entry name" value="WD40_repeat_dom_sf"/>
</dbReference>
<dbReference type="InterPro" id="IPR001680">
    <property type="entry name" value="WD40_rpt"/>
</dbReference>
<dbReference type="PANTHER" id="PTHR45992">
    <property type="entry name" value="EUKARYOTIC ELONGATION FACTOR 2 KINASE-RELATED"/>
    <property type="match status" value="1"/>
</dbReference>
<dbReference type="PANTHER" id="PTHR45992:SF1">
    <property type="entry name" value="MYOSIN HEAVY CHAIN KINASE C"/>
    <property type="match status" value="1"/>
</dbReference>
<dbReference type="Pfam" id="PF02816">
    <property type="entry name" value="Alpha_kinase"/>
    <property type="match status" value="1"/>
</dbReference>
<dbReference type="Pfam" id="PF00400">
    <property type="entry name" value="WD40"/>
    <property type="match status" value="3"/>
</dbReference>
<dbReference type="PRINTS" id="PR00320">
    <property type="entry name" value="GPROTEINBRPT"/>
</dbReference>
<dbReference type="SMART" id="SM00811">
    <property type="entry name" value="Alpha_kinase"/>
    <property type="match status" value="1"/>
</dbReference>
<dbReference type="SMART" id="SM00320">
    <property type="entry name" value="WD40"/>
    <property type="match status" value="7"/>
</dbReference>
<dbReference type="SUPFAM" id="SSF56112">
    <property type="entry name" value="Protein kinase-like (PK-like)"/>
    <property type="match status" value="1"/>
</dbReference>
<dbReference type="SUPFAM" id="SSF50978">
    <property type="entry name" value="WD40 repeat-like"/>
    <property type="match status" value="1"/>
</dbReference>
<dbReference type="PROSITE" id="PS51158">
    <property type="entry name" value="ALPHA_KINASE"/>
    <property type="match status" value="1"/>
</dbReference>
<dbReference type="PROSITE" id="PS00678">
    <property type="entry name" value="WD_REPEATS_1"/>
    <property type="match status" value="4"/>
</dbReference>
<dbReference type="PROSITE" id="PS50082">
    <property type="entry name" value="WD_REPEATS_2"/>
    <property type="match status" value="4"/>
</dbReference>
<dbReference type="PROSITE" id="PS50294">
    <property type="entry name" value="WD_REPEATS_REGION"/>
    <property type="match status" value="1"/>
</dbReference>
<name>MHCKC_DICDI</name>
<keyword id="KW-0067">ATP-binding</keyword>
<keyword id="KW-0963">Cytoplasm</keyword>
<keyword id="KW-0418">Kinase</keyword>
<keyword id="KW-0472">Membrane</keyword>
<keyword id="KW-0547">Nucleotide-binding</keyword>
<keyword id="KW-0597">Phosphoprotein</keyword>
<keyword id="KW-1185">Reference proteome</keyword>
<keyword id="KW-0677">Repeat</keyword>
<keyword id="KW-0723">Serine/threonine-protein kinase</keyword>
<keyword id="KW-0808">Transferase</keyword>
<keyword id="KW-0853">WD repeat</keyword>
<organism>
    <name type="scientific">Dictyostelium discoideum</name>
    <name type="common">Social amoeba</name>
    <dbReference type="NCBI Taxonomy" id="44689"/>
    <lineage>
        <taxon>Eukaryota</taxon>
        <taxon>Amoebozoa</taxon>
        <taxon>Evosea</taxon>
        <taxon>Eumycetozoa</taxon>
        <taxon>Dictyostelia</taxon>
        <taxon>Dictyosteliales</taxon>
        <taxon>Dictyosteliaceae</taxon>
        <taxon>Dictyostelium</taxon>
    </lineage>
</organism>
<protein>
    <recommendedName>
        <fullName>Myosin heavy chain kinase C</fullName>
        <shortName>MHCK-C</shortName>
        <ecNumber evidence="11 12">2.7.11.7</ecNumber>
    </recommendedName>
</protein>
<comment type="function">
    <text evidence="1 4 5 6 7">Phosphorylates threonine at 'Thr-1823', 'Thr-1833' and 'Thr-2029' in the C-terminal tail region of myosin II heavy chain (mhcA) (By similarity). This phosphorylation is critical in actin-activated ATPase activity of the myosin and regulating the assembly and disassembly of myosin II filament. In vitro, catalytic domain phosphorylates mhcA, myelin basic protein, myosin regulatory light chain, casein and caldesmon. Drives the disassembly of myosin II filaments for efficient cytokinesis and recycling of myosin II that occurs during late cytokinesis. Can be activated in vitro by autophosphorylation.</text>
</comment>
<comment type="catalytic activity">
    <reaction evidence="11 12">
        <text>L-threonyl-[myosin heavy-chain] + ATP = O-phospho-L-threonyl-[myosin heavy-chain] + ADP + H(+)</text>
        <dbReference type="Rhea" id="RHEA:11424"/>
        <dbReference type="Rhea" id="RHEA-COMP:13718"/>
        <dbReference type="Rhea" id="RHEA-COMP:13719"/>
        <dbReference type="ChEBI" id="CHEBI:15378"/>
        <dbReference type="ChEBI" id="CHEBI:30013"/>
        <dbReference type="ChEBI" id="CHEBI:30616"/>
        <dbReference type="ChEBI" id="CHEBI:61977"/>
        <dbReference type="ChEBI" id="CHEBI:456216"/>
        <dbReference type="EC" id="2.7.11.7"/>
    </reaction>
    <physiologicalReaction direction="left-to-right" evidence="11 12">
        <dbReference type="Rhea" id="RHEA:11425"/>
    </physiologicalReaction>
</comment>
<comment type="subunit">
    <text evidence="5">Interacts with myosin II heavy chain (mhcA).</text>
</comment>
<comment type="subcellular location">
    <subcellularLocation>
        <location>Cytoplasm</location>
        <location>Cell cortex</location>
    </subcellularLocation>
    <subcellularLocation>
        <location>Membrane</location>
    </subcellularLocation>
    <subcellularLocation>
        <location>Cleavage furrow</location>
    </subcellularLocation>
    <text evidence="6">Localizes to the cortex of interphase cells, cleavage furrow of mitotic cells (at the late stage of cytokinesis), and posterior side of both migrating cells and daughter cells beginning to separate at the very late stage of cytokinesis. Localization is myosin II-dependent. Occasionally displays transient enrichment in pseudopodial extensions as well.</text>
</comment>
<comment type="developmental stage">
    <text evidence="6">Expressed continuously throughout development.</text>
</comment>
<comment type="induction">
    <text evidence="9">Down-regulated by growth on bacteria.</text>
</comment>
<comment type="PTM">
    <text>Autophosphorylated in vitro.</text>
</comment>
<comment type="disruption phenotype">
    <text evidence="6 7 8">Null cells exhibit excessive aggregation of myosin II filaments in the cleavage furrows and in the posteriors of the daughter cells once cleavage is complete. The cleavage process is slowed down for cells where the gene is disrupted. Myosin II overassembly increases incrementally in the mutants, with the mhkA, mhkB, mhkC triple mutant showing severe myosin II overassembly and myosin II phosphorylation is highly reduced. Overexpression results in multinucleation of cells.</text>
</comment>
<comment type="similarity">
    <text evidence="10">Belongs to the protein kinase superfamily. Alpha-type protein kinase family. ALPK subfamily.</text>
</comment>